<proteinExistence type="evidence at transcript level"/>
<gene>
    <name type="primary">CAT</name>
</gene>
<keyword id="KW-0963">Cytoplasm</keyword>
<keyword id="KW-0349">Heme</keyword>
<keyword id="KW-0376">Hydrogen peroxide</keyword>
<keyword id="KW-0408">Iron</keyword>
<keyword id="KW-0479">Metal-binding</keyword>
<keyword id="KW-0560">Oxidoreductase</keyword>
<keyword id="KW-0575">Peroxidase</keyword>
<keyword id="KW-0576">Peroxisome</keyword>
<evidence type="ECO:0000250" key="1"/>
<evidence type="ECO:0000250" key="2">
    <source>
        <dbReference type="UniProtKB" id="P04040"/>
    </source>
</evidence>
<evidence type="ECO:0000250" key="3">
    <source>
        <dbReference type="UniProtKB" id="P25819"/>
    </source>
</evidence>
<evidence type="ECO:0000255" key="4">
    <source>
        <dbReference type="PROSITE-ProRule" id="PRU10013"/>
    </source>
</evidence>
<evidence type="ECO:0000305" key="5"/>
<feature type="chain" id="PRO_0000084934" description="Catalase">
    <location>
        <begin position="1"/>
        <end position="492"/>
    </location>
</feature>
<feature type="active site" evidence="4">
    <location>
        <position position="65"/>
    </location>
</feature>
<feature type="active site" evidence="4">
    <location>
        <position position="138"/>
    </location>
</feature>
<feature type="binding site" description="axial binding residue" evidence="2">
    <location>
        <position position="348"/>
    </location>
    <ligand>
        <name>heme</name>
        <dbReference type="ChEBI" id="CHEBI:30413"/>
    </ligand>
    <ligandPart>
        <name>Fe</name>
        <dbReference type="ChEBI" id="CHEBI:18248"/>
    </ligandPart>
</feature>
<organism>
    <name type="scientific">Capsicum annuum</name>
    <name type="common">Capsicum pepper</name>
    <dbReference type="NCBI Taxonomy" id="4072"/>
    <lineage>
        <taxon>Eukaryota</taxon>
        <taxon>Viridiplantae</taxon>
        <taxon>Streptophyta</taxon>
        <taxon>Embryophyta</taxon>
        <taxon>Tracheophyta</taxon>
        <taxon>Spermatophyta</taxon>
        <taxon>Magnoliopsida</taxon>
        <taxon>eudicotyledons</taxon>
        <taxon>Gunneridae</taxon>
        <taxon>Pentapetalae</taxon>
        <taxon>asterids</taxon>
        <taxon>lamiids</taxon>
        <taxon>Solanales</taxon>
        <taxon>Solanaceae</taxon>
        <taxon>Solanoideae</taxon>
        <taxon>Capsiceae</taxon>
        <taxon>Capsicum</taxon>
    </lineage>
</organism>
<dbReference type="EC" id="1.11.1.6" evidence="4"/>
<dbReference type="EMBL" id="AF227952">
    <property type="protein sequence ID" value="AAF34718.1"/>
    <property type="molecule type" value="mRNA"/>
</dbReference>
<dbReference type="PIR" id="JE0126">
    <property type="entry name" value="JE0126"/>
</dbReference>
<dbReference type="SMR" id="Q9M5L6"/>
<dbReference type="GO" id="GO:0005829">
    <property type="term" value="C:cytosol"/>
    <property type="evidence" value="ECO:0007669"/>
    <property type="project" value="UniProtKB-SubCell"/>
</dbReference>
<dbReference type="GO" id="GO:0005782">
    <property type="term" value="C:peroxisomal matrix"/>
    <property type="evidence" value="ECO:0007669"/>
    <property type="project" value="UniProtKB-SubCell"/>
</dbReference>
<dbReference type="GO" id="GO:0004096">
    <property type="term" value="F:catalase activity"/>
    <property type="evidence" value="ECO:0007669"/>
    <property type="project" value="UniProtKB-EC"/>
</dbReference>
<dbReference type="GO" id="GO:0020037">
    <property type="term" value="F:heme binding"/>
    <property type="evidence" value="ECO:0007669"/>
    <property type="project" value="InterPro"/>
</dbReference>
<dbReference type="GO" id="GO:0046872">
    <property type="term" value="F:metal ion binding"/>
    <property type="evidence" value="ECO:0007669"/>
    <property type="project" value="UniProtKB-KW"/>
</dbReference>
<dbReference type="GO" id="GO:0042744">
    <property type="term" value="P:hydrogen peroxide catabolic process"/>
    <property type="evidence" value="ECO:0007669"/>
    <property type="project" value="UniProtKB-KW"/>
</dbReference>
<dbReference type="GO" id="GO:0006979">
    <property type="term" value="P:response to oxidative stress"/>
    <property type="evidence" value="ECO:0007669"/>
    <property type="project" value="InterPro"/>
</dbReference>
<dbReference type="CDD" id="cd08154">
    <property type="entry name" value="catalase_clade_1"/>
    <property type="match status" value="1"/>
</dbReference>
<dbReference type="FunFam" id="2.40.180.10:FF:000002">
    <property type="entry name" value="Catalase"/>
    <property type="match status" value="1"/>
</dbReference>
<dbReference type="Gene3D" id="2.40.180.10">
    <property type="entry name" value="Catalase core domain"/>
    <property type="match status" value="1"/>
</dbReference>
<dbReference type="InterPro" id="IPR018028">
    <property type="entry name" value="Catalase"/>
</dbReference>
<dbReference type="InterPro" id="IPR024708">
    <property type="entry name" value="Catalase_AS"/>
</dbReference>
<dbReference type="InterPro" id="IPR024711">
    <property type="entry name" value="Catalase_clade1/3"/>
</dbReference>
<dbReference type="InterPro" id="IPR011614">
    <property type="entry name" value="Catalase_core"/>
</dbReference>
<dbReference type="InterPro" id="IPR002226">
    <property type="entry name" value="Catalase_haem_BS"/>
</dbReference>
<dbReference type="InterPro" id="IPR010582">
    <property type="entry name" value="Catalase_immune_responsive"/>
</dbReference>
<dbReference type="InterPro" id="IPR020835">
    <property type="entry name" value="Catalase_sf"/>
</dbReference>
<dbReference type="PANTHER" id="PTHR11465">
    <property type="entry name" value="CATALASE"/>
    <property type="match status" value="1"/>
</dbReference>
<dbReference type="PANTHER" id="PTHR11465:SF64">
    <property type="entry name" value="CATALASE ISOZYME 1"/>
    <property type="match status" value="1"/>
</dbReference>
<dbReference type="Pfam" id="PF00199">
    <property type="entry name" value="Catalase"/>
    <property type="match status" value="1"/>
</dbReference>
<dbReference type="Pfam" id="PF06628">
    <property type="entry name" value="Catalase-rel"/>
    <property type="match status" value="1"/>
</dbReference>
<dbReference type="PIRSF" id="PIRSF038928">
    <property type="entry name" value="Catalase_clade1-3"/>
    <property type="match status" value="1"/>
</dbReference>
<dbReference type="PRINTS" id="PR00067">
    <property type="entry name" value="CATALASE"/>
</dbReference>
<dbReference type="SMART" id="SM01060">
    <property type="entry name" value="Catalase"/>
    <property type="match status" value="1"/>
</dbReference>
<dbReference type="SUPFAM" id="SSF56634">
    <property type="entry name" value="Heme-dependent catalase-like"/>
    <property type="match status" value="1"/>
</dbReference>
<dbReference type="PROSITE" id="PS00437">
    <property type="entry name" value="CATALASE_1"/>
    <property type="match status" value="1"/>
</dbReference>
<dbReference type="PROSITE" id="PS00438">
    <property type="entry name" value="CATALASE_2"/>
    <property type="match status" value="1"/>
</dbReference>
<dbReference type="PROSITE" id="PS51402">
    <property type="entry name" value="CATALASE_3"/>
    <property type="match status" value="1"/>
</dbReference>
<name>CATA_CAPAN</name>
<accession>Q9M5L6</accession>
<sequence>MDLSKYRPSSAYDSPFLTTNAGGPVYNNVSSLTVGPRGPVLLEDYHLIEKLATFVRERIPERVVHARGASAKGFFEVTHDISHLTCADFLRAPGVQTPVICRFSTVVHERGSPESIRDIRGFAVKFYTREGNFDLVGNNVPVFFNRDAKSFPDTIRALKPNPKSHIQENWRILDFFSFLPESLHTFAFFYDDVCLPTDYRHMEGFGVHAYQLINKAGKAHYVKFHWKPTCGVKSMTEEEAIRVGGTNHSHATKDLYDSIAAGNYPEWKLFIQIMNPEDVDKFDFDPLDVTKTWPEDILPLMPVGRLVLNRNIDNFFAENEQLAFNPGHIVPGVYYSEDKLLQTRIFAYADTQRHRIGPNYMQLPVNAPKCAHHNNHRDGAMNFMHRDEEVDYLPSRFDPCRPAEQYPIPSCVLTGRREKCVIPKENNFKQAGERYRSWAPDRQDRYINKWVESLSDPRATHEIRSIWISYLSQADKSCGQKVASRLTVKPTM</sequence>
<protein>
    <recommendedName>
        <fullName>Catalase</fullName>
        <ecNumber evidence="4">1.11.1.6</ecNumber>
    </recommendedName>
    <alternativeName>
        <fullName>CaCat1</fullName>
    </alternativeName>
</protein>
<comment type="function">
    <text evidence="2">Catalyzes the degradation of hydrogen peroxide (H(2)O(2)) generated by peroxisomal oxidases to water and oxygen, thereby protecting cells from the toxic effects of hydrogen peroxide.</text>
</comment>
<comment type="catalytic activity">
    <reaction evidence="4">
        <text>2 H2O2 = O2 + 2 H2O</text>
        <dbReference type="Rhea" id="RHEA:20309"/>
        <dbReference type="ChEBI" id="CHEBI:15377"/>
        <dbReference type="ChEBI" id="CHEBI:15379"/>
        <dbReference type="ChEBI" id="CHEBI:16240"/>
        <dbReference type="EC" id="1.11.1.6"/>
    </reaction>
</comment>
<comment type="cofactor">
    <cofactor evidence="2">
        <name>heme</name>
        <dbReference type="ChEBI" id="CHEBI:30413"/>
    </cofactor>
</comment>
<comment type="subunit">
    <text evidence="1">Homotetramer.</text>
</comment>
<comment type="subcellular location">
    <subcellularLocation>
        <location evidence="3">Cytoplasm</location>
        <location evidence="3">Cytosol</location>
    </subcellularLocation>
    <subcellularLocation>
        <location evidence="3">Peroxisome matrix</location>
    </subcellularLocation>
</comment>
<comment type="tissue specificity">
    <text>In stems, leaves, roots and developing fruits.</text>
</comment>
<comment type="induction">
    <text>In roots, by aluminum and salt. Expressed with a circadian rhythm reaching a maximum at late in the dark period or early in the light period.</text>
</comment>
<comment type="similarity">
    <text evidence="5">Belongs to the catalase family.</text>
</comment>
<reference key="1">
    <citation type="journal article" date="2001" name="Plant Sci.">
        <title>Molecular cloning, characterization and expression analysis of a catalase cDNA from hot pepper (Capsicum annuum L.).</title>
        <authorList>
            <person name="Kwon S.-I."/>
            <person name="An C.-S."/>
        </authorList>
    </citation>
    <scope>NUCLEOTIDE SEQUENCE [MRNA]</scope>
</reference>